<name>PLIG1_LACMU</name>
<proteinExistence type="evidence at transcript level"/>
<protein>
    <recommendedName>
        <fullName evidence="4">Phospholipase A2 inhibitor LNF1</fullName>
    </recommendedName>
    <alternativeName>
        <fullName evidence="5">Lachesis neutralizing factor 1</fullName>
        <shortName>gamma-PLI</shortName>
    </alternativeName>
</protein>
<evidence type="ECO:0000250" key="1">
    <source>
        <dbReference type="UniProtKB" id="Q7LZI1"/>
    </source>
</evidence>
<evidence type="ECO:0000250" key="2">
    <source>
        <dbReference type="UniProtKB" id="Q90358"/>
    </source>
</evidence>
<evidence type="ECO:0000255" key="3"/>
<evidence type="ECO:0000303" key="4">
    <source>
    </source>
</evidence>
<evidence type="ECO:0000305" key="5"/>
<evidence type="ECO:0000305" key="6">
    <source>
    </source>
</evidence>
<organism>
    <name type="scientific">Lachesis muta muta</name>
    <name type="common">Bushmaster</name>
    <dbReference type="NCBI Taxonomy" id="8753"/>
    <lineage>
        <taxon>Eukaryota</taxon>
        <taxon>Metazoa</taxon>
        <taxon>Chordata</taxon>
        <taxon>Craniata</taxon>
        <taxon>Vertebrata</taxon>
        <taxon>Euteleostomi</taxon>
        <taxon>Lepidosauria</taxon>
        <taxon>Squamata</taxon>
        <taxon>Bifurcata</taxon>
        <taxon>Unidentata</taxon>
        <taxon>Episquamata</taxon>
        <taxon>Toxicofera</taxon>
        <taxon>Serpentes</taxon>
        <taxon>Colubroidea</taxon>
        <taxon>Viperidae</taxon>
        <taxon>Crotalinae</taxon>
        <taxon>Lachesis</taxon>
    </lineage>
</organism>
<accession>P60591</accession>
<dbReference type="EMBL" id="AY425347">
    <property type="protein sequence ID" value="AAR04438.1"/>
    <property type="molecule type" value="mRNA"/>
</dbReference>
<dbReference type="GO" id="GO:0005576">
    <property type="term" value="C:extracellular region"/>
    <property type="evidence" value="ECO:0007669"/>
    <property type="project" value="UniProtKB-SubCell"/>
</dbReference>
<dbReference type="GO" id="GO:0019834">
    <property type="term" value="F:phospholipase A2 inhibitor activity"/>
    <property type="evidence" value="ECO:0007669"/>
    <property type="project" value="UniProtKB-KW"/>
</dbReference>
<dbReference type="CDD" id="cd23629">
    <property type="entry name" value="TFP_LU_ECD_PLIGA"/>
    <property type="match status" value="1"/>
</dbReference>
<dbReference type="Gene3D" id="2.10.60.10">
    <property type="entry name" value="CD59"/>
    <property type="match status" value="1"/>
</dbReference>
<dbReference type="InterPro" id="IPR050918">
    <property type="entry name" value="CNF-like_PLA2_Inhibitor"/>
</dbReference>
<dbReference type="InterPro" id="IPR016054">
    <property type="entry name" value="LY6_UPA_recep-like"/>
</dbReference>
<dbReference type="InterPro" id="IPR016338">
    <property type="entry name" value="PLipase_A2-inh_b-type"/>
</dbReference>
<dbReference type="InterPro" id="IPR004126">
    <property type="entry name" value="PLipase_A2_inh_N"/>
</dbReference>
<dbReference type="InterPro" id="IPR045860">
    <property type="entry name" value="Snake_toxin-like_sf"/>
</dbReference>
<dbReference type="PANTHER" id="PTHR20914">
    <property type="entry name" value="LY6/PLAUR DOMAIN-CONTAINING PROTEIN 8"/>
    <property type="match status" value="1"/>
</dbReference>
<dbReference type="PANTHER" id="PTHR20914:SF30">
    <property type="entry name" value="LY6_PLAUR DOMAIN CONTAINING 9"/>
    <property type="match status" value="1"/>
</dbReference>
<dbReference type="Pfam" id="PF02988">
    <property type="entry name" value="PLA2_inh"/>
    <property type="match status" value="1"/>
</dbReference>
<dbReference type="Pfam" id="PF00021">
    <property type="entry name" value="UPAR_LY6"/>
    <property type="match status" value="1"/>
</dbReference>
<dbReference type="PIRSF" id="PIRSF002023">
    <property type="entry name" value="PLA2_inhib_alpha/gamma"/>
    <property type="match status" value="1"/>
</dbReference>
<dbReference type="SMART" id="SM00134">
    <property type="entry name" value="LU"/>
    <property type="match status" value="1"/>
</dbReference>
<dbReference type="SUPFAM" id="SSF57302">
    <property type="entry name" value="Snake toxin-like"/>
    <property type="match status" value="2"/>
</dbReference>
<reference key="1">
    <citation type="journal article" date="2003" name="Toxicon">
        <title>Molecular cloning of a gamma-phospholipase A2 inhibitor from Lachesis muta muta (the bushmaster snake).</title>
        <authorList>
            <person name="Fortes-Dias C.L."/>
            <person name="Barcellos C.J."/>
            <person name="Estevao-Costa M.I."/>
        </authorList>
    </citation>
    <scope>NUCLEOTIDE SEQUENCE [MRNA]</scope>
    <source>
        <tissue>Liver</tissue>
    </source>
</reference>
<feature type="signal peptide" evidence="3">
    <location>
        <begin position="1"/>
        <end position="19"/>
    </location>
</feature>
<feature type="chain" id="PRO_0000023002" description="Phospholipase A2 inhibitor LNF1" evidence="6">
    <location>
        <begin position="20"/>
        <end position="200"/>
    </location>
</feature>
<feature type="glycosylation site" description="N-linked (GlcNAc...) asparagine" evidence="3">
    <location>
        <position position="176"/>
    </location>
</feature>
<feature type="disulfide bond" evidence="1">
    <location>
        <begin position="22"/>
        <end position="46"/>
    </location>
</feature>
<feature type="disulfide bond" evidence="1">
    <location>
        <begin position="25"/>
        <end position="32"/>
    </location>
</feature>
<feature type="disulfide bond" evidence="1">
    <location>
        <begin position="39"/>
        <end position="67"/>
    </location>
</feature>
<feature type="disulfide bond" evidence="1">
    <location>
        <begin position="73"/>
        <end position="94"/>
    </location>
</feature>
<feature type="disulfide bond" evidence="1">
    <location>
        <begin position="95"/>
        <end position="100"/>
    </location>
</feature>
<feature type="disulfide bond" evidence="1">
    <location>
        <begin position="118"/>
        <end position="143"/>
    </location>
</feature>
<feature type="disulfide bond" evidence="1">
    <location>
        <begin position="136"/>
        <end position="165"/>
    </location>
</feature>
<feature type="disulfide bond" evidence="1">
    <location>
        <begin position="169"/>
        <end position="191"/>
    </location>
</feature>
<comment type="function">
    <text>Inhibits the enzymatic activity of phospholipase A2 (PA2).</text>
</comment>
<comment type="subunit">
    <text evidence="2">Occurs as a mixture of oligomers. Tetrameric arrangement appears to be the predominant quaternary structure.</text>
</comment>
<comment type="subcellular location">
    <subcellularLocation>
        <location evidence="6">Secreted</location>
    </subcellularLocation>
    <text evidence="6">Secreted in blood plasma.</text>
</comment>
<comment type="tissue specificity">
    <text evidence="6">Expressed by the liver.</text>
</comment>
<comment type="similarity">
    <text evidence="5">Belongs to the CNF-like-inhibitor family.</text>
</comment>
<keyword id="KW-1015">Disulfide bond</keyword>
<keyword id="KW-0325">Glycoprotein</keyword>
<keyword id="KW-0593">Phospholipase A2 inhibitor</keyword>
<keyword id="KW-0964">Secreted</keyword>
<keyword id="KW-0732">Signal</keyword>
<sequence>MKYLHTICLLFIFVARGNSRSCDFCHNIGKDCDGYEEECSSPEDVCGKVLLEISSASLSVRTVHKNCFSSSICKLGQFDVNIGHHSYIRGRINCCEKEPCEDQLFPGLPLSKPNGYYCPGAIGLFTKDSTEYEAICKGTQTKCINIVGHRYEPFPGDISYNLKGCVSSCPLLSLSNATFEQNRNYLEKVECKDAIRLASL</sequence>